<dbReference type="EC" id="2.8.4.4" evidence="1"/>
<dbReference type="EMBL" id="CP000727">
    <property type="protein sequence ID" value="ABS37233.1"/>
    <property type="molecule type" value="Genomic_DNA"/>
</dbReference>
<dbReference type="EMBL" id="AM412317">
    <property type="protein sequence ID" value="CAL83953.1"/>
    <property type="molecule type" value="Genomic_DNA"/>
</dbReference>
<dbReference type="RefSeq" id="WP_011986784.1">
    <property type="nucleotide sequence ID" value="NC_009698.1"/>
</dbReference>
<dbReference type="RefSeq" id="YP_001254902.1">
    <property type="nucleotide sequence ID" value="NC_009495.1"/>
</dbReference>
<dbReference type="RefSeq" id="YP_001388097.1">
    <property type="nucleotide sequence ID" value="NC_009698.1"/>
</dbReference>
<dbReference type="SMR" id="A5I4I1"/>
<dbReference type="GeneID" id="5186662"/>
<dbReference type="KEGG" id="cbh:CLC_2253"/>
<dbReference type="KEGG" id="cbo:CBO2407"/>
<dbReference type="PATRIC" id="fig|413999.7.peg.2383"/>
<dbReference type="HOGENOM" id="CLU_018697_0_1_9"/>
<dbReference type="PRO" id="PR:A5I4I1"/>
<dbReference type="Proteomes" id="UP000001986">
    <property type="component" value="Chromosome"/>
</dbReference>
<dbReference type="GO" id="GO:0005829">
    <property type="term" value="C:cytosol"/>
    <property type="evidence" value="ECO:0000318"/>
    <property type="project" value="GO_Central"/>
</dbReference>
<dbReference type="GO" id="GO:0051539">
    <property type="term" value="F:4 iron, 4 sulfur cluster binding"/>
    <property type="evidence" value="ECO:0000318"/>
    <property type="project" value="GO_Central"/>
</dbReference>
<dbReference type="GO" id="GO:0035599">
    <property type="term" value="F:aspartic acid methylthiotransferase activity"/>
    <property type="evidence" value="ECO:0000318"/>
    <property type="project" value="GO_Central"/>
</dbReference>
<dbReference type="GO" id="GO:0046872">
    <property type="term" value="F:metal ion binding"/>
    <property type="evidence" value="ECO:0007669"/>
    <property type="project" value="UniProtKB-KW"/>
</dbReference>
<dbReference type="GO" id="GO:0103039">
    <property type="term" value="F:protein methylthiotransferase activity"/>
    <property type="evidence" value="ECO:0007669"/>
    <property type="project" value="UniProtKB-EC"/>
</dbReference>
<dbReference type="GO" id="GO:0006400">
    <property type="term" value="P:tRNA modification"/>
    <property type="evidence" value="ECO:0007669"/>
    <property type="project" value="InterPro"/>
</dbReference>
<dbReference type="CDD" id="cd01335">
    <property type="entry name" value="Radical_SAM"/>
    <property type="match status" value="1"/>
</dbReference>
<dbReference type="FunFam" id="2.40.50.140:FF:000210">
    <property type="entry name" value="Ribosomal protein S12 methylthiotransferase RimO"/>
    <property type="match status" value="1"/>
</dbReference>
<dbReference type="FunFam" id="3.40.50.12160:FF:000002">
    <property type="entry name" value="Ribosomal protein S12 methylthiotransferase RimO"/>
    <property type="match status" value="1"/>
</dbReference>
<dbReference type="FunFam" id="3.80.30.20:FF:000001">
    <property type="entry name" value="tRNA-2-methylthio-N(6)-dimethylallyladenosine synthase 2"/>
    <property type="match status" value="1"/>
</dbReference>
<dbReference type="Gene3D" id="3.40.50.12160">
    <property type="entry name" value="Methylthiotransferase, N-terminal domain"/>
    <property type="match status" value="1"/>
</dbReference>
<dbReference type="Gene3D" id="2.40.50.140">
    <property type="entry name" value="Nucleic acid-binding proteins"/>
    <property type="match status" value="1"/>
</dbReference>
<dbReference type="Gene3D" id="3.80.30.20">
    <property type="entry name" value="tm_1862 like domain"/>
    <property type="match status" value="1"/>
</dbReference>
<dbReference type="HAMAP" id="MF_01865">
    <property type="entry name" value="MTTase_RimO"/>
    <property type="match status" value="1"/>
</dbReference>
<dbReference type="InterPro" id="IPR006638">
    <property type="entry name" value="Elp3/MiaA/NifB-like_rSAM"/>
</dbReference>
<dbReference type="InterPro" id="IPR005839">
    <property type="entry name" value="Methylthiotransferase"/>
</dbReference>
<dbReference type="InterPro" id="IPR020612">
    <property type="entry name" value="Methylthiotransferase_CS"/>
</dbReference>
<dbReference type="InterPro" id="IPR013848">
    <property type="entry name" value="Methylthiotransferase_N"/>
</dbReference>
<dbReference type="InterPro" id="IPR038135">
    <property type="entry name" value="Methylthiotransferase_N_sf"/>
</dbReference>
<dbReference type="InterPro" id="IPR012340">
    <property type="entry name" value="NA-bd_OB-fold"/>
</dbReference>
<dbReference type="InterPro" id="IPR005840">
    <property type="entry name" value="Ribosomal_uS12_MeSTrfase_RimO"/>
</dbReference>
<dbReference type="InterPro" id="IPR007197">
    <property type="entry name" value="rSAM"/>
</dbReference>
<dbReference type="InterPro" id="IPR023404">
    <property type="entry name" value="rSAM_horseshoe"/>
</dbReference>
<dbReference type="InterPro" id="IPR002792">
    <property type="entry name" value="TRAM_dom"/>
</dbReference>
<dbReference type="NCBIfam" id="TIGR01125">
    <property type="entry name" value="30S ribosomal protein S12 methylthiotransferase RimO"/>
    <property type="match status" value="1"/>
</dbReference>
<dbReference type="NCBIfam" id="TIGR00089">
    <property type="entry name" value="MiaB/RimO family radical SAM methylthiotransferase"/>
    <property type="match status" value="1"/>
</dbReference>
<dbReference type="PANTHER" id="PTHR43837">
    <property type="entry name" value="RIBOSOMAL PROTEIN S12 METHYLTHIOTRANSFERASE RIMO"/>
    <property type="match status" value="1"/>
</dbReference>
<dbReference type="PANTHER" id="PTHR43837:SF1">
    <property type="entry name" value="RIBOSOMAL PROTEIN US12 METHYLTHIOTRANSFERASE RIMO"/>
    <property type="match status" value="1"/>
</dbReference>
<dbReference type="Pfam" id="PF04055">
    <property type="entry name" value="Radical_SAM"/>
    <property type="match status" value="1"/>
</dbReference>
<dbReference type="Pfam" id="PF18693">
    <property type="entry name" value="TRAM_2"/>
    <property type="match status" value="1"/>
</dbReference>
<dbReference type="Pfam" id="PF00919">
    <property type="entry name" value="UPF0004"/>
    <property type="match status" value="1"/>
</dbReference>
<dbReference type="SFLD" id="SFLDG01082">
    <property type="entry name" value="B12-binding_domain_containing"/>
    <property type="match status" value="1"/>
</dbReference>
<dbReference type="SFLD" id="SFLDG01061">
    <property type="entry name" value="methylthiotransferase"/>
    <property type="match status" value="1"/>
</dbReference>
<dbReference type="SFLD" id="SFLDF00274">
    <property type="entry name" value="ribosomal_protein_S12_methylth"/>
    <property type="match status" value="1"/>
</dbReference>
<dbReference type="SMART" id="SM00729">
    <property type="entry name" value="Elp3"/>
    <property type="match status" value="1"/>
</dbReference>
<dbReference type="SUPFAM" id="SSF102114">
    <property type="entry name" value="Radical SAM enzymes"/>
    <property type="match status" value="1"/>
</dbReference>
<dbReference type="PROSITE" id="PS51449">
    <property type="entry name" value="MTTASE_N"/>
    <property type="match status" value="1"/>
</dbReference>
<dbReference type="PROSITE" id="PS01278">
    <property type="entry name" value="MTTASE_RADICAL"/>
    <property type="match status" value="1"/>
</dbReference>
<dbReference type="PROSITE" id="PS51918">
    <property type="entry name" value="RADICAL_SAM"/>
    <property type="match status" value="1"/>
</dbReference>
<dbReference type="PROSITE" id="PS50926">
    <property type="entry name" value="TRAM"/>
    <property type="match status" value="1"/>
</dbReference>
<protein>
    <recommendedName>
        <fullName evidence="1">Ribosomal protein uS12 methylthiotransferase RimO</fullName>
        <shortName evidence="1">uS12 MTTase</shortName>
        <shortName evidence="1">uS12 methylthiotransferase</shortName>
        <ecNumber evidence="1">2.8.4.4</ecNumber>
    </recommendedName>
    <alternativeName>
        <fullName evidence="1">Ribosomal protein uS12 (aspartate-C(3))-methylthiotransferase</fullName>
    </alternativeName>
    <alternativeName>
        <fullName evidence="1">Ribosome maturation factor RimO</fullName>
    </alternativeName>
</protein>
<sequence>MEKIKVALVSLGCDKNRIDSELMLYKLNEEAELVKDPKEAQVIIVNTCGFIETAKEESINTILQMASYKKTHNCKVLVVTGCLTQRYKGELKELIPEMDIMLGVNDYDKLLESIKVFLKSGEKSFYHKYSDTKINEGNRILTTPTYTAYVRIAEGCNNFCTYCAIPRIRGKYRSRKKENILKEVENLAKQGVKEIILIAQDTTMYGIDIYGKKVLHELLRDISKVEGVKWIRLLYCYPEEITKELIEEIKNNDKVCKYLDLPIQQISNSVLKRMGRKTTKETIINIIKKLRKEIEGITLRTSLIVGFPGETEGEFSELKEFVSDVKLDKLGVFKYSKEEGTSAALMEEQIDEEIKEKREEEIMILQQSISKDINKEKIGKTYEVIVEGTKEDMYYGRNYEMSPEIDGEIYFEKDENVKIGDIIKVKVTHSLEYDLIGVVYNELSK</sequence>
<gene>
    <name evidence="1" type="primary">rimO</name>
    <name type="ordered locus">CBO2407</name>
    <name type="ordered locus">CLC_2253</name>
</gene>
<organism>
    <name type="scientific">Clostridium botulinum (strain Hall / ATCC 3502 / NCTC 13319 / Type A)</name>
    <dbReference type="NCBI Taxonomy" id="441771"/>
    <lineage>
        <taxon>Bacteria</taxon>
        <taxon>Bacillati</taxon>
        <taxon>Bacillota</taxon>
        <taxon>Clostridia</taxon>
        <taxon>Eubacteriales</taxon>
        <taxon>Clostridiaceae</taxon>
        <taxon>Clostridium</taxon>
    </lineage>
</organism>
<keyword id="KW-0004">4Fe-4S</keyword>
<keyword id="KW-0963">Cytoplasm</keyword>
<keyword id="KW-0408">Iron</keyword>
<keyword id="KW-0411">Iron-sulfur</keyword>
<keyword id="KW-0479">Metal-binding</keyword>
<keyword id="KW-1185">Reference proteome</keyword>
<keyword id="KW-0949">S-adenosyl-L-methionine</keyword>
<keyword id="KW-0808">Transferase</keyword>
<name>RIMO_CLOBH</name>
<reference key="1">
    <citation type="journal article" date="2007" name="Genome Res.">
        <title>Genome sequence of a proteolytic (Group I) Clostridium botulinum strain Hall A and comparative analysis of the clostridial genomes.</title>
        <authorList>
            <person name="Sebaihia M."/>
            <person name="Peck M.W."/>
            <person name="Minton N.P."/>
            <person name="Thomson N.R."/>
            <person name="Holden M.T.G."/>
            <person name="Mitchell W.J."/>
            <person name="Carter A.T."/>
            <person name="Bentley S.D."/>
            <person name="Mason D.R."/>
            <person name="Crossman L."/>
            <person name="Paul C.J."/>
            <person name="Ivens A."/>
            <person name="Wells-Bennik M.H.J."/>
            <person name="Davis I.J."/>
            <person name="Cerdeno-Tarraga A.M."/>
            <person name="Churcher C."/>
            <person name="Quail M.A."/>
            <person name="Chillingworth T."/>
            <person name="Feltwell T."/>
            <person name="Fraser A."/>
            <person name="Goodhead I."/>
            <person name="Hance Z."/>
            <person name="Jagels K."/>
            <person name="Larke N."/>
            <person name="Maddison M."/>
            <person name="Moule S."/>
            <person name="Mungall K."/>
            <person name="Norbertczak H."/>
            <person name="Rabbinowitsch E."/>
            <person name="Sanders M."/>
            <person name="Simmonds M."/>
            <person name="White B."/>
            <person name="Whithead S."/>
            <person name="Parkhill J."/>
        </authorList>
    </citation>
    <scope>NUCLEOTIDE SEQUENCE [LARGE SCALE GENOMIC DNA]</scope>
    <source>
        <strain>Hall / ATCC 3502 / NCTC 13319 / Type A</strain>
    </source>
</reference>
<reference key="2">
    <citation type="journal article" date="2007" name="PLoS ONE">
        <title>Analysis of the neurotoxin complex genes in Clostridium botulinum A1-A4 and B1 strains: BoNT/A3, /Ba4 and /B1 clusters are located within plasmids.</title>
        <authorList>
            <person name="Smith T.J."/>
            <person name="Hill K.K."/>
            <person name="Foley B.T."/>
            <person name="Detter J.C."/>
            <person name="Munk A.C."/>
            <person name="Bruce D.C."/>
            <person name="Doggett N.A."/>
            <person name="Smith L.A."/>
            <person name="Marks J.D."/>
            <person name="Xie G."/>
            <person name="Brettin T.S."/>
        </authorList>
    </citation>
    <scope>NUCLEOTIDE SEQUENCE [LARGE SCALE GENOMIC DNA]</scope>
    <source>
        <strain>Hall / ATCC 3502 / NCTC 13319 / Type A</strain>
    </source>
</reference>
<evidence type="ECO:0000255" key="1">
    <source>
        <dbReference type="HAMAP-Rule" id="MF_01865"/>
    </source>
</evidence>
<evidence type="ECO:0000255" key="2">
    <source>
        <dbReference type="PROSITE-ProRule" id="PRU01266"/>
    </source>
</evidence>
<feature type="chain" id="PRO_0000374779" description="Ribosomal protein uS12 methylthiotransferase RimO">
    <location>
        <begin position="1"/>
        <end position="445"/>
    </location>
</feature>
<feature type="domain" description="MTTase N-terminal" evidence="1">
    <location>
        <begin position="4"/>
        <end position="119"/>
    </location>
</feature>
<feature type="domain" description="Radical SAM core" evidence="2">
    <location>
        <begin position="142"/>
        <end position="372"/>
    </location>
</feature>
<feature type="domain" description="TRAM" evidence="1">
    <location>
        <begin position="375"/>
        <end position="441"/>
    </location>
</feature>
<feature type="binding site" evidence="1">
    <location>
        <position position="13"/>
    </location>
    <ligand>
        <name>[4Fe-4S] cluster</name>
        <dbReference type="ChEBI" id="CHEBI:49883"/>
        <label>1</label>
    </ligand>
</feature>
<feature type="binding site" evidence="1">
    <location>
        <position position="48"/>
    </location>
    <ligand>
        <name>[4Fe-4S] cluster</name>
        <dbReference type="ChEBI" id="CHEBI:49883"/>
        <label>1</label>
    </ligand>
</feature>
<feature type="binding site" evidence="1">
    <location>
        <position position="82"/>
    </location>
    <ligand>
        <name>[4Fe-4S] cluster</name>
        <dbReference type="ChEBI" id="CHEBI:49883"/>
        <label>1</label>
    </ligand>
</feature>
<feature type="binding site" evidence="1">
    <location>
        <position position="156"/>
    </location>
    <ligand>
        <name>[4Fe-4S] cluster</name>
        <dbReference type="ChEBI" id="CHEBI:49883"/>
        <label>2</label>
        <note>4Fe-4S-S-AdoMet</note>
    </ligand>
</feature>
<feature type="binding site" evidence="1">
    <location>
        <position position="160"/>
    </location>
    <ligand>
        <name>[4Fe-4S] cluster</name>
        <dbReference type="ChEBI" id="CHEBI:49883"/>
        <label>2</label>
        <note>4Fe-4S-S-AdoMet</note>
    </ligand>
</feature>
<feature type="binding site" evidence="1">
    <location>
        <position position="163"/>
    </location>
    <ligand>
        <name>[4Fe-4S] cluster</name>
        <dbReference type="ChEBI" id="CHEBI:49883"/>
        <label>2</label>
        <note>4Fe-4S-S-AdoMet</note>
    </ligand>
</feature>
<accession>A5I4I1</accession>
<accession>A7G5N2</accession>
<proteinExistence type="inferred from homology"/>
<comment type="function">
    <text evidence="1">Catalyzes the methylthiolation of an aspartic acid residue of ribosomal protein uS12.</text>
</comment>
<comment type="catalytic activity">
    <reaction evidence="1">
        <text>L-aspartate(89)-[ribosomal protein uS12]-hydrogen + (sulfur carrier)-SH + AH2 + 2 S-adenosyl-L-methionine = 3-methylsulfanyl-L-aspartate(89)-[ribosomal protein uS12]-hydrogen + (sulfur carrier)-H + 5'-deoxyadenosine + L-methionine + A + S-adenosyl-L-homocysteine + 2 H(+)</text>
        <dbReference type="Rhea" id="RHEA:37087"/>
        <dbReference type="Rhea" id="RHEA-COMP:10460"/>
        <dbReference type="Rhea" id="RHEA-COMP:10461"/>
        <dbReference type="Rhea" id="RHEA-COMP:14737"/>
        <dbReference type="Rhea" id="RHEA-COMP:14739"/>
        <dbReference type="ChEBI" id="CHEBI:13193"/>
        <dbReference type="ChEBI" id="CHEBI:15378"/>
        <dbReference type="ChEBI" id="CHEBI:17319"/>
        <dbReference type="ChEBI" id="CHEBI:17499"/>
        <dbReference type="ChEBI" id="CHEBI:29917"/>
        <dbReference type="ChEBI" id="CHEBI:29961"/>
        <dbReference type="ChEBI" id="CHEBI:57844"/>
        <dbReference type="ChEBI" id="CHEBI:57856"/>
        <dbReference type="ChEBI" id="CHEBI:59789"/>
        <dbReference type="ChEBI" id="CHEBI:64428"/>
        <dbReference type="ChEBI" id="CHEBI:73599"/>
        <dbReference type="EC" id="2.8.4.4"/>
    </reaction>
</comment>
<comment type="cofactor">
    <cofactor evidence="1">
        <name>[4Fe-4S] cluster</name>
        <dbReference type="ChEBI" id="CHEBI:49883"/>
    </cofactor>
    <text evidence="1">Binds 2 [4Fe-4S] clusters. One cluster is coordinated with 3 cysteines and an exchangeable S-adenosyl-L-methionine.</text>
</comment>
<comment type="subcellular location">
    <subcellularLocation>
        <location evidence="1">Cytoplasm</location>
    </subcellularLocation>
</comment>
<comment type="similarity">
    <text evidence="1">Belongs to the methylthiotransferase family. RimO subfamily.</text>
</comment>